<keyword id="KW-0131">Cell cycle</keyword>
<keyword id="KW-0132">Cell division</keyword>
<keyword id="KW-0133">Cell shape</keyword>
<keyword id="KW-0961">Cell wall biogenesis/degradation</keyword>
<keyword id="KW-0963">Cytoplasm</keyword>
<keyword id="KW-0573">Peptidoglycan synthesis</keyword>
<keyword id="KW-0670">Pyruvate</keyword>
<keyword id="KW-0808">Transferase</keyword>
<name>MURA_RICRO</name>
<organism>
    <name type="scientific">Rickettsia rickettsii (strain Iowa)</name>
    <dbReference type="NCBI Taxonomy" id="452659"/>
    <lineage>
        <taxon>Bacteria</taxon>
        <taxon>Pseudomonadati</taxon>
        <taxon>Pseudomonadota</taxon>
        <taxon>Alphaproteobacteria</taxon>
        <taxon>Rickettsiales</taxon>
        <taxon>Rickettsiaceae</taxon>
        <taxon>Rickettsieae</taxon>
        <taxon>Rickettsia</taxon>
        <taxon>spotted fever group</taxon>
    </lineage>
</organism>
<evidence type="ECO:0000255" key="1">
    <source>
        <dbReference type="HAMAP-Rule" id="MF_00111"/>
    </source>
</evidence>
<proteinExistence type="inferred from homology"/>
<dbReference type="EC" id="2.5.1.7" evidence="1"/>
<dbReference type="EMBL" id="CP000766">
    <property type="protein sequence ID" value="ABY72852.1"/>
    <property type="molecule type" value="Genomic_DNA"/>
</dbReference>
<dbReference type="RefSeq" id="WP_012151046.1">
    <property type="nucleotide sequence ID" value="NC_010263.3"/>
</dbReference>
<dbReference type="SMR" id="B0BYC6"/>
<dbReference type="GeneID" id="79937566"/>
<dbReference type="KEGG" id="rrj:RrIowa_1050"/>
<dbReference type="eggNOG" id="COG0766">
    <property type="taxonomic scope" value="Bacteria"/>
</dbReference>
<dbReference type="HOGENOM" id="CLU_027387_0_0_5"/>
<dbReference type="UniPathway" id="UPA00219"/>
<dbReference type="Proteomes" id="UP000000796">
    <property type="component" value="Chromosome"/>
</dbReference>
<dbReference type="GO" id="GO:0005737">
    <property type="term" value="C:cytoplasm"/>
    <property type="evidence" value="ECO:0007669"/>
    <property type="project" value="UniProtKB-SubCell"/>
</dbReference>
<dbReference type="GO" id="GO:0008760">
    <property type="term" value="F:UDP-N-acetylglucosamine 1-carboxyvinyltransferase activity"/>
    <property type="evidence" value="ECO:0007669"/>
    <property type="project" value="UniProtKB-UniRule"/>
</dbReference>
<dbReference type="GO" id="GO:0051301">
    <property type="term" value="P:cell division"/>
    <property type="evidence" value="ECO:0007669"/>
    <property type="project" value="UniProtKB-KW"/>
</dbReference>
<dbReference type="GO" id="GO:0071555">
    <property type="term" value="P:cell wall organization"/>
    <property type="evidence" value="ECO:0007669"/>
    <property type="project" value="UniProtKB-KW"/>
</dbReference>
<dbReference type="GO" id="GO:0009252">
    <property type="term" value="P:peptidoglycan biosynthetic process"/>
    <property type="evidence" value="ECO:0007669"/>
    <property type="project" value="UniProtKB-UniRule"/>
</dbReference>
<dbReference type="GO" id="GO:0008360">
    <property type="term" value="P:regulation of cell shape"/>
    <property type="evidence" value="ECO:0007669"/>
    <property type="project" value="UniProtKB-KW"/>
</dbReference>
<dbReference type="GO" id="GO:0019277">
    <property type="term" value="P:UDP-N-acetylgalactosamine biosynthetic process"/>
    <property type="evidence" value="ECO:0007669"/>
    <property type="project" value="InterPro"/>
</dbReference>
<dbReference type="CDD" id="cd01555">
    <property type="entry name" value="UdpNAET"/>
    <property type="match status" value="1"/>
</dbReference>
<dbReference type="FunFam" id="3.65.10.10:FF:000001">
    <property type="entry name" value="UDP-N-acetylglucosamine 1-carboxyvinyltransferase"/>
    <property type="match status" value="1"/>
</dbReference>
<dbReference type="Gene3D" id="3.65.10.10">
    <property type="entry name" value="Enolpyruvate transferase domain"/>
    <property type="match status" value="2"/>
</dbReference>
<dbReference type="HAMAP" id="MF_00111">
    <property type="entry name" value="MurA"/>
    <property type="match status" value="1"/>
</dbReference>
<dbReference type="InterPro" id="IPR001986">
    <property type="entry name" value="Enolpyruvate_Tfrase_dom"/>
</dbReference>
<dbReference type="InterPro" id="IPR036968">
    <property type="entry name" value="Enolpyruvate_Tfrase_sf"/>
</dbReference>
<dbReference type="InterPro" id="IPR050068">
    <property type="entry name" value="MurA_subfamily"/>
</dbReference>
<dbReference type="InterPro" id="IPR013792">
    <property type="entry name" value="RNA3'P_cycl/enolpyr_Trfase_a/b"/>
</dbReference>
<dbReference type="InterPro" id="IPR005750">
    <property type="entry name" value="UDP_GlcNAc_COvinyl_MurA"/>
</dbReference>
<dbReference type="NCBIfam" id="TIGR01072">
    <property type="entry name" value="murA"/>
    <property type="match status" value="1"/>
</dbReference>
<dbReference type="NCBIfam" id="NF006873">
    <property type="entry name" value="PRK09369.1"/>
    <property type="match status" value="1"/>
</dbReference>
<dbReference type="PANTHER" id="PTHR43783">
    <property type="entry name" value="UDP-N-ACETYLGLUCOSAMINE 1-CARBOXYVINYLTRANSFERASE"/>
    <property type="match status" value="1"/>
</dbReference>
<dbReference type="PANTHER" id="PTHR43783:SF1">
    <property type="entry name" value="UDP-N-ACETYLGLUCOSAMINE 1-CARBOXYVINYLTRANSFERASE"/>
    <property type="match status" value="1"/>
</dbReference>
<dbReference type="Pfam" id="PF00275">
    <property type="entry name" value="EPSP_synthase"/>
    <property type="match status" value="1"/>
</dbReference>
<dbReference type="SUPFAM" id="SSF55205">
    <property type="entry name" value="EPT/RTPC-like"/>
    <property type="match status" value="1"/>
</dbReference>
<reference key="1">
    <citation type="journal article" date="2008" name="Infect. Immun.">
        <title>Genomic comparison of virulent Rickettsia rickettsii Sheila Smith and avirulent Rickettsia rickettsii Iowa.</title>
        <authorList>
            <person name="Ellison D.W."/>
            <person name="Clark T.R."/>
            <person name="Sturdevant D.E."/>
            <person name="Virtaneva K."/>
            <person name="Porcella S.F."/>
            <person name="Hackstadt T."/>
        </authorList>
    </citation>
    <scope>NUCLEOTIDE SEQUENCE [LARGE SCALE GENOMIC DNA]</scope>
    <source>
        <strain>Iowa</strain>
    </source>
</reference>
<comment type="function">
    <text evidence="1">Cell wall formation. Adds enolpyruvyl to UDP-N-acetylglucosamine.</text>
</comment>
<comment type="catalytic activity">
    <reaction evidence="1">
        <text>phosphoenolpyruvate + UDP-N-acetyl-alpha-D-glucosamine = UDP-N-acetyl-3-O-(1-carboxyvinyl)-alpha-D-glucosamine + phosphate</text>
        <dbReference type="Rhea" id="RHEA:18681"/>
        <dbReference type="ChEBI" id="CHEBI:43474"/>
        <dbReference type="ChEBI" id="CHEBI:57705"/>
        <dbReference type="ChEBI" id="CHEBI:58702"/>
        <dbReference type="ChEBI" id="CHEBI:68483"/>
        <dbReference type="EC" id="2.5.1.7"/>
    </reaction>
</comment>
<comment type="pathway">
    <text evidence="1">Cell wall biogenesis; peptidoglycan biosynthesis.</text>
</comment>
<comment type="subcellular location">
    <subcellularLocation>
        <location evidence="1">Cytoplasm</location>
    </subcellularLocation>
</comment>
<comment type="similarity">
    <text evidence="1">Belongs to the EPSP synthase family. MurA subfamily.</text>
</comment>
<gene>
    <name evidence="1" type="primary">murA</name>
    <name type="ordered locus">RrIowa_1050</name>
</gene>
<protein>
    <recommendedName>
        <fullName evidence="1">UDP-N-acetylglucosamine 1-carboxyvinyltransferase</fullName>
        <ecNumber evidence="1">2.5.1.7</ecNumber>
    </recommendedName>
    <alternativeName>
        <fullName evidence="1">Enoylpyruvate transferase</fullName>
    </alternativeName>
    <alternativeName>
        <fullName evidence="1">UDP-N-acetylglucosamine enolpyruvyl transferase</fullName>
        <shortName evidence="1">EPT</shortName>
    </alternativeName>
</protein>
<accession>B0BYC6</accession>
<sequence length="419" mass="45336">MHKLIIHGGTPLKGSINISGAKNAVLPIMAASILTDKLHITNVPKLTDVSTMKDLLRSHGADIEIIKHQDEFELIIDTKNINNFTADYEIVRKMRASIWVLGPLLTKYGKAKVSLPGGCAIGARQVDLHIAVLKAMGAEIEIEDGYINASSKGRLKGTHFVFDKVSVGATINAILVAVLAEGETVLFNCGREPEIVDLCNCLITMGADIAGIGTSEITIKGKDSLNKASYKVLSDRIEAGTYMFAAAITKGDVKICGIDYHIVENIALKLIETGIKVVPINNGVQVTYEGKLNSVDLETNPYPGFATDLQAQFMSLMTLSSGVSMITENIFENRFMHVPELCRMGADIVVRGNKAVVRGVEMLKGAEVMASDLRASVSLILAGLSTNSKTVLHRIYHLDRGFQDLEKKLSNCGADIKRV</sequence>
<feature type="chain" id="PRO_1000075979" description="UDP-N-acetylglucosamine 1-carboxyvinyltransferase">
    <location>
        <begin position="1"/>
        <end position="419"/>
    </location>
</feature>
<feature type="active site" description="Proton donor" evidence="1">
    <location>
        <position position="119"/>
    </location>
</feature>
<feature type="binding site" evidence="1">
    <location>
        <begin position="22"/>
        <end position="23"/>
    </location>
    <ligand>
        <name>phosphoenolpyruvate</name>
        <dbReference type="ChEBI" id="CHEBI:58702"/>
    </ligand>
</feature>
<feature type="binding site" evidence="1">
    <location>
        <position position="95"/>
    </location>
    <ligand>
        <name>UDP-N-acetyl-alpha-D-glucosamine</name>
        <dbReference type="ChEBI" id="CHEBI:57705"/>
    </ligand>
</feature>
<feature type="binding site" evidence="1">
    <location>
        <begin position="164"/>
        <end position="167"/>
    </location>
    <ligand>
        <name>UDP-N-acetyl-alpha-D-glucosamine</name>
        <dbReference type="ChEBI" id="CHEBI:57705"/>
    </ligand>
</feature>
<feature type="binding site" evidence="1">
    <location>
        <position position="308"/>
    </location>
    <ligand>
        <name>UDP-N-acetyl-alpha-D-glucosamine</name>
        <dbReference type="ChEBI" id="CHEBI:57705"/>
    </ligand>
</feature>
<feature type="binding site" evidence="1">
    <location>
        <position position="330"/>
    </location>
    <ligand>
        <name>UDP-N-acetyl-alpha-D-glucosamine</name>
        <dbReference type="ChEBI" id="CHEBI:57705"/>
    </ligand>
</feature>
<feature type="modified residue" description="2-(S-cysteinyl)pyruvic acid O-phosphothioketal" evidence="1">
    <location>
        <position position="119"/>
    </location>
</feature>